<reference key="1">
    <citation type="journal article" date="2010" name="Proc. Natl. Acad. Sci. U.S.A.">
        <title>Insights into evolution of multicellular fungi from the assembled chromosomes of the mushroom Coprinopsis cinerea (Coprinus cinereus).</title>
        <authorList>
            <person name="Stajich J.E."/>
            <person name="Wilke S.K."/>
            <person name="Ahren D."/>
            <person name="Au C.H."/>
            <person name="Birren B.W."/>
            <person name="Borodovsky M."/>
            <person name="Burns C."/>
            <person name="Canbaeck B."/>
            <person name="Casselton L.A."/>
            <person name="Cheng C.K."/>
            <person name="Deng J."/>
            <person name="Dietrich F.S."/>
            <person name="Fargo D.C."/>
            <person name="Farman M.L."/>
            <person name="Gathman A.C."/>
            <person name="Goldberg J."/>
            <person name="Guigo R."/>
            <person name="Hoegger P.J."/>
            <person name="Hooker J.B."/>
            <person name="Huggins A."/>
            <person name="James T.Y."/>
            <person name="Kamada T."/>
            <person name="Kilaru S."/>
            <person name="Kodira C."/>
            <person name="Kuees U."/>
            <person name="Kupfer D."/>
            <person name="Kwan H.S."/>
            <person name="Lomsadze A."/>
            <person name="Li W."/>
            <person name="Lilly W.W."/>
            <person name="Ma L.-J."/>
            <person name="Mackey A.J."/>
            <person name="Manning G."/>
            <person name="Martin F."/>
            <person name="Muraguchi H."/>
            <person name="Natvig D.O."/>
            <person name="Palmerini H."/>
            <person name="Ramesh M.A."/>
            <person name="Rehmeyer C.J."/>
            <person name="Roe B.A."/>
            <person name="Shenoy N."/>
            <person name="Stanke M."/>
            <person name="Ter-Hovhannisyan V."/>
            <person name="Tunlid A."/>
            <person name="Velagapudi R."/>
            <person name="Vision T.J."/>
            <person name="Zeng Q."/>
            <person name="Zolan M.E."/>
            <person name="Pukkila P.J."/>
        </authorList>
    </citation>
    <scope>NUCLEOTIDE SEQUENCE [LARGE SCALE GENOMIC DNA]</scope>
    <source>
        <strain>Okayama-7 / 130 / ATCC MYA-4618 / FGSC 9003</strain>
    </source>
</reference>
<keyword id="KW-0256">Endoplasmic reticulum</keyword>
<keyword id="KW-0445">Lipid transport</keyword>
<keyword id="KW-0446">Lipid-binding</keyword>
<keyword id="KW-0472">Membrane</keyword>
<keyword id="KW-1185">Reference proteome</keyword>
<keyword id="KW-0812">Transmembrane</keyword>
<keyword id="KW-1133">Transmembrane helix</keyword>
<keyword id="KW-0813">Transport</keyword>
<dbReference type="EMBL" id="AACS02000001">
    <property type="protein sequence ID" value="EAU92874.1"/>
    <property type="molecule type" value="Genomic_DNA"/>
</dbReference>
<dbReference type="RefSeq" id="XP_001828867.1">
    <property type="nucleotide sequence ID" value="XM_001828815.1"/>
</dbReference>
<dbReference type="SMR" id="A8N1W8"/>
<dbReference type="FunCoup" id="A8N1W8">
    <property type="interactions" value="86"/>
</dbReference>
<dbReference type="STRING" id="240176.A8N1W8"/>
<dbReference type="GeneID" id="6005293"/>
<dbReference type="KEGG" id="cci:CC1G_03661"/>
<dbReference type="VEuPathDB" id="FungiDB:CC1G_03661"/>
<dbReference type="eggNOG" id="ENOG502QUUW">
    <property type="taxonomic scope" value="Eukaryota"/>
</dbReference>
<dbReference type="HOGENOM" id="CLU_032730_0_0_1"/>
<dbReference type="InParanoid" id="A8N1W8"/>
<dbReference type="OMA" id="WSFTQGL"/>
<dbReference type="OrthoDB" id="5599157at2759"/>
<dbReference type="Proteomes" id="UP000001861">
    <property type="component" value="Unassembled WGS sequence"/>
</dbReference>
<dbReference type="GO" id="GO:0005789">
    <property type="term" value="C:endoplasmic reticulum membrane"/>
    <property type="evidence" value="ECO:0007669"/>
    <property type="project" value="UniProtKB-SubCell"/>
</dbReference>
<dbReference type="GO" id="GO:0032865">
    <property type="term" value="C:ERMES complex"/>
    <property type="evidence" value="ECO:0007669"/>
    <property type="project" value="UniProtKB-UniRule"/>
</dbReference>
<dbReference type="GO" id="GO:0008289">
    <property type="term" value="F:lipid binding"/>
    <property type="evidence" value="ECO:0007669"/>
    <property type="project" value="UniProtKB-KW"/>
</dbReference>
<dbReference type="GO" id="GO:0000002">
    <property type="term" value="P:mitochondrial genome maintenance"/>
    <property type="evidence" value="ECO:0007669"/>
    <property type="project" value="UniProtKB-UniRule"/>
</dbReference>
<dbReference type="GO" id="GO:1990456">
    <property type="term" value="P:mitochondrion-endoplasmic reticulum membrane tethering"/>
    <property type="evidence" value="ECO:0007669"/>
    <property type="project" value="TreeGrafter"/>
</dbReference>
<dbReference type="GO" id="GO:0015914">
    <property type="term" value="P:phospholipid transport"/>
    <property type="evidence" value="ECO:0007669"/>
    <property type="project" value="TreeGrafter"/>
</dbReference>
<dbReference type="GO" id="GO:0045040">
    <property type="term" value="P:protein insertion into mitochondrial outer membrane"/>
    <property type="evidence" value="ECO:0007669"/>
    <property type="project" value="UniProtKB-UniRule"/>
</dbReference>
<dbReference type="CDD" id="cd21671">
    <property type="entry name" value="SMP_Mmm1"/>
    <property type="match status" value="1"/>
</dbReference>
<dbReference type="HAMAP" id="MF_03103">
    <property type="entry name" value="Mmm1"/>
    <property type="match status" value="1"/>
</dbReference>
<dbReference type="InterPro" id="IPR027537">
    <property type="entry name" value="Mmm1"/>
</dbReference>
<dbReference type="InterPro" id="IPR019411">
    <property type="entry name" value="MMM1_dom"/>
</dbReference>
<dbReference type="InterPro" id="IPR031468">
    <property type="entry name" value="SMP_LBD"/>
</dbReference>
<dbReference type="PANTHER" id="PTHR13466:SF0">
    <property type="entry name" value="SMP-LTD DOMAIN-CONTAINING PROTEIN"/>
    <property type="match status" value="1"/>
</dbReference>
<dbReference type="PANTHER" id="PTHR13466">
    <property type="entry name" value="TEX2 PROTEIN-RELATED"/>
    <property type="match status" value="1"/>
</dbReference>
<dbReference type="Pfam" id="PF10296">
    <property type="entry name" value="MMM1"/>
    <property type="match status" value="2"/>
</dbReference>
<dbReference type="PROSITE" id="PS51847">
    <property type="entry name" value="SMP"/>
    <property type="match status" value="1"/>
</dbReference>
<evidence type="ECO:0000255" key="1">
    <source>
        <dbReference type="HAMAP-Rule" id="MF_03103"/>
    </source>
</evidence>
<evidence type="ECO:0000256" key="2">
    <source>
        <dbReference type="SAM" id="MobiDB-lite"/>
    </source>
</evidence>
<feature type="chain" id="PRO_0000384227" description="Maintenance of mitochondrial morphology protein 1">
    <location>
        <begin position="1"/>
        <end position="299"/>
    </location>
</feature>
<feature type="topological domain" description="Lumenal" evidence="1">
    <location>
        <begin position="1"/>
        <end position="15"/>
    </location>
</feature>
<feature type="transmembrane region" description="Helical" evidence="1">
    <location>
        <begin position="16"/>
        <end position="36"/>
    </location>
</feature>
<feature type="topological domain" description="Cytoplasmic" evidence="1">
    <location>
        <begin position="37"/>
        <end position="299"/>
    </location>
</feature>
<feature type="domain" description="SMP-LTD" evidence="1">
    <location>
        <begin position="73"/>
        <end position="281"/>
    </location>
</feature>
<feature type="region of interest" description="Disordered" evidence="2">
    <location>
        <begin position="47"/>
        <end position="68"/>
    </location>
</feature>
<protein>
    <recommendedName>
        <fullName evidence="1">Maintenance of mitochondrial morphology protein 1</fullName>
    </recommendedName>
</protein>
<sequence>MTNIIFSLQPTFTQGLILGQLSVLVLLGLILKYLFLDSTKNPFETTSYHPQFDRKPARKQQAQDSQSQSEIDDVESLDWFNLLLQQVANVYRSKLRGDLAGAEGDETARQRIEAFANKIRPAGFLDLIKIHSVDLGAGAPTLFNARIRESDPNDPDSPPEIEFDAVYEDTLSLSLSTSYLFNYPTASFARLPISLTISLSQFKSSIRVIPPTPDSVAPVLTFTISPDFVLDLTTTSLMGSRAKLANVPKLHELIQHQVRRVLGGRATWKVVLPGLASVAEAKQQVLKQEQEESKRQEEA</sequence>
<accession>A8N1W8</accession>
<name>MMM1_COPC7</name>
<gene>
    <name evidence="1" type="primary">MMM1</name>
    <name type="ORF">CC1G_03661</name>
</gene>
<proteinExistence type="inferred from homology"/>
<organism>
    <name type="scientific">Coprinopsis cinerea (strain Okayama-7 / 130 / ATCC MYA-4618 / FGSC 9003)</name>
    <name type="common">Inky cap fungus</name>
    <name type="synonym">Hormographiella aspergillata</name>
    <dbReference type="NCBI Taxonomy" id="240176"/>
    <lineage>
        <taxon>Eukaryota</taxon>
        <taxon>Fungi</taxon>
        <taxon>Dikarya</taxon>
        <taxon>Basidiomycota</taxon>
        <taxon>Agaricomycotina</taxon>
        <taxon>Agaricomycetes</taxon>
        <taxon>Agaricomycetidae</taxon>
        <taxon>Agaricales</taxon>
        <taxon>Agaricineae</taxon>
        <taxon>Psathyrellaceae</taxon>
        <taxon>Coprinopsis</taxon>
    </lineage>
</organism>
<comment type="function">
    <text evidence="1">Component of the ERMES/MDM complex, which serves as a molecular tether to connect the endoplasmic reticulum (ER) and mitochondria. Components of this complex are involved in the control of mitochondrial shape and protein biogenesis, and function in nonvesicular lipid trafficking between the ER and mitochondria. The MDM12-MMM1 subcomplex functions in the major beta-barrel assembly pathway that is responsible for biogenesis of all outer membrane beta-barrel proteins, and acts in a late step after the SAM complex. The MDM10-MDM12-MMM1 subcomplex further acts in the TOM40-specific pathway after the action of the MDM12-MMM1 complex. Essential for establishing and maintaining the structure of mitochondria and maintenance of mtDNA nucleoids.</text>
</comment>
<comment type="subunit">
    <text evidence="1">Homodimer. Component of the ER-mitochondria encounter structure (ERMES) or MDM complex, composed of MMM1, MDM10, MDM12 and MDM34. A MMM1 homodimer associates with one molecule of MDM12 on each side in a pairwise head-to-tail manner, and the SMP-LTD domains of MMM1 and MDM12 generate a continuous hydrophobic tunnel for phospholipid trafficking.</text>
</comment>
<comment type="subcellular location">
    <subcellularLocation>
        <location evidence="1">Endoplasmic reticulum membrane</location>
        <topology evidence="1">Single-pass type I membrane protein</topology>
    </subcellularLocation>
    <text evidence="1">The ERMES/MDM complex localizes to a few discrete foci (around 10 per single cell), that represent mitochondria-endoplasmic reticulum junctions. These foci are often found next to mtDNA nucleoids.</text>
</comment>
<comment type="domain">
    <text evidence="1">The SMP-LTD domain is a barrel-like domain that can bind various types of glycerophospholipids in its interior and mediate their transfer between two adjacent bilayers.</text>
</comment>
<comment type="similarity">
    <text evidence="1">Belongs to the MMM1 family.</text>
</comment>